<gene>
    <name evidence="1" type="primary">rpsN</name>
    <name type="synonym">rpsN2</name>
    <name type="ordered locus">BQ2027_MB2082C</name>
</gene>
<proteinExistence type="inferred from homology"/>
<evidence type="ECO:0000255" key="1">
    <source>
        <dbReference type="HAMAP-Rule" id="MF_00537"/>
    </source>
</evidence>
<evidence type="ECO:0000256" key="2">
    <source>
        <dbReference type="SAM" id="MobiDB-lite"/>
    </source>
</evidence>
<evidence type="ECO:0000305" key="3"/>
<name>RS14_MYCBO</name>
<keyword id="KW-1185">Reference proteome</keyword>
<keyword id="KW-0687">Ribonucleoprotein</keyword>
<keyword id="KW-0689">Ribosomal protein</keyword>
<keyword id="KW-0694">RNA-binding</keyword>
<keyword id="KW-0699">rRNA-binding</keyword>
<feature type="chain" id="PRO_0000130913" description="Small ribosomal subunit protein uS14A">
    <location>
        <begin position="1"/>
        <end position="101"/>
    </location>
</feature>
<feature type="region of interest" description="Disordered" evidence="2">
    <location>
        <begin position="28"/>
        <end position="57"/>
    </location>
</feature>
<feature type="compositionally biased region" description="Polar residues" evidence="2">
    <location>
        <begin position="33"/>
        <end position="45"/>
    </location>
</feature>
<comment type="function">
    <text evidence="1">Binds 16S rRNA, required for the assembly of 30S particles and may also be responsible for determining the conformation of the 16S rRNA at the A site.</text>
</comment>
<comment type="subunit">
    <text evidence="1">Part of the 30S ribosomal subunit. Contacts proteins S3 and S10.</text>
</comment>
<comment type="similarity">
    <text evidence="1">Belongs to the universal ribosomal protein uS14 family.</text>
</comment>
<organism>
    <name type="scientific">Mycobacterium bovis (strain ATCC BAA-935 / AF2122/97)</name>
    <dbReference type="NCBI Taxonomy" id="233413"/>
    <lineage>
        <taxon>Bacteria</taxon>
        <taxon>Bacillati</taxon>
        <taxon>Actinomycetota</taxon>
        <taxon>Actinomycetes</taxon>
        <taxon>Mycobacteriales</taxon>
        <taxon>Mycobacteriaceae</taxon>
        <taxon>Mycobacterium</taxon>
        <taxon>Mycobacterium tuberculosis complex</taxon>
    </lineage>
</organism>
<dbReference type="EMBL" id="LT708304">
    <property type="protein sequence ID" value="SIU00689.1"/>
    <property type="molecule type" value="Genomic_DNA"/>
</dbReference>
<dbReference type="RefSeq" id="NP_855732.1">
    <property type="nucleotide sequence ID" value="NC_002945.3"/>
</dbReference>
<dbReference type="RefSeq" id="WP_003410624.1">
    <property type="nucleotide sequence ID" value="NC_002945.4"/>
</dbReference>
<dbReference type="SMR" id="P66406"/>
<dbReference type="GeneID" id="45426034"/>
<dbReference type="KEGG" id="mbo:BQ2027_MB2082C"/>
<dbReference type="PATRIC" id="fig|233413.5.peg.2289"/>
<dbReference type="Proteomes" id="UP000001419">
    <property type="component" value="Chromosome"/>
</dbReference>
<dbReference type="GO" id="GO:0015935">
    <property type="term" value="C:small ribosomal subunit"/>
    <property type="evidence" value="ECO:0007669"/>
    <property type="project" value="TreeGrafter"/>
</dbReference>
<dbReference type="GO" id="GO:0019843">
    <property type="term" value="F:rRNA binding"/>
    <property type="evidence" value="ECO:0007669"/>
    <property type="project" value="UniProtKB-UniRule"/>
</dbReference>
<dbReference type="GO" id="GO:0003735">
    <property type="term" value="F:structural constituent of ribosome"/>
    <property type="evidence" value="ECO:0007669"/>
    <property type="project" value="InterPro"/>
</dbReference>
<dbReference type="GO" id="GO:0006412">
    <property type="term" value="P:translation"/>
    <property type="evidence" value="ECO:0007669"/>
    <property type="project" value="UniProtKB-UniRule"/>
</dbReference>
<dbReference type="FunFam" id="1.10.287.1480:FF:000001">
    <property type="entry name" value="30S ribosomal protein S14"/>
    <property type="match status" value="1"/>
</dbReference>
<dbReference type="Gene3D" id="1.10.287.1480">
    <property type="match status" value="1"/>
</dbReference>
<dbReference type="HAMAP" id="MF_00537">
    <property type="entry name" value="Ribosomal_uS14_1"/>
    <property type="match status" value="1"/>
</dbReference>
<dbReference type="InterPro" id="IPR001209">
    <property type="entry name" value="Ribosomal_uS14"/>
</dbReference>
<dbReference type="InterPro" id="IPR023036">
    <property type="entry name" value="Ribosomal_uS14_bac/plastid"/>
</dbReference>
<dbReference type="NCBIfam" id="NF006477">
    <property type="entry name" value="PRK08881.1"/>
    <property type="match status" value="1"/>
</dbReference>
<dbReference type="PANTHER" id="PTHR19836">
    <property type="entry name" value="30S RIBOSOMAL PROTEIN S14"/>
    <property type="match status" value="1"/>
</dbReference>
<dbReference type="PANTHER" id="PTHR19836:SF23">
    <property type="entry name" value="SMALL RIBOSOMAL SUBUNIT PROTEIN US14A"/>
    <property type="match status" value="1"/>
</dbReference>
<dbReference type="Pfam" id="PF00253">
    <property type="entry name" value="Ribosomal_S14"/>
    <property type="match status" value="1"/>
</dbReference>
<dbReference type="SUPFAM" id="SSF57716">
    <property type="entry name" value="Glucocorticoid receptor-like (DNA-binding domain)"/>
    <property type="match status" value="1"/>
</dbReference>
<accession>P66406</accession>
<accession>A0A1R3Y064</accession>
<accession>O86355</accession>
<accession>X2BJM0</accession>
<sequence length="101" mass="11441">MAKKSKIVKNQRRAATVARYASRRTALKDIIRSPSSAPEQRSTAQRALARQPRDASPVRLRNRDAIDGRPRGHLRKFGLSRVRVRQLAHDGHLPGVRKASW</sequence>
<reference key="1">
    <citation type="journal article" date="2003" name="Proc. Natl. Acad. Sci. U.S.A.">
        <title>The complete genome sequence of Mycobacterium bovis.</title>
        <authorList>
            <person name="Garnier T."/>
            <person name="Eiglmeier K."/>
            <person name="Camus J.-C."/>
            <person name="Medina N."/>
            <person name="Mansoor H."/>
            <person name="Pryor M."/>
            <person name="Duthoy S."/>
            <person name="Grondin S."/>
            <person name="Lacroix C."/>
            <person name="Monsempe C."/>
            <person name="Simon S."/>
            <person name="Harris B."/>
            <person name="Atkin R."/>
            <person name="Doggett J."/>
            <person name="Mayes R."/>
            <person name="Keating L."/>
            <person name="Wheeler P.R."/>
            <person name="Parkhill J."/>
            <person name="Barrell B.G."/>
            <person name="Cole S.T."/>
            <person name="Gordon S.V."/>
            <person name="Hewinson R.G."/>
        </authorList>
    </citation>
    <scope>NUCLEOTIDE SEQUENCE [LARGE SCALE GENOMIC DNA]</scope>
    <source>
        <strain>ATCC BAA-935 / AF2122/97</strain>
    </source>
</reference>
<reference key="2">
    <citation type="journal article" date="2017" name="Genome Announc.">
        <title>Updated reference genome sequence and annotation of Mycobacterium bovis AF2122/97.</title>
        <authorList>
            <person name="Malone K.M."/>
            <person name="Farrell D."/>
            <person name="Stuber T.P."/>
            <person name="Schubert O.T."/>
            <person name="Aebersold R."/>
            <person name="Robbe-Austerman S."/>
            <person name="Gordon S.V."/>
        </authorList>
    </citation>
    <scope>NUCLEOTIDE SEQUENCE [LARGE SCALE GENOMIC DNA]</scope>
    <scope>GENOME REANNOTATION</scope>
    <source>
        <strain>ATCC BAA-935 / AF2122/97</strain>
    </source>
</reference>
<protein>
    <recommendedName>
        <fullName evidence="1">Small ribosomal subunit protein uS14A</fullName>
    </recommendedName>
    <alternativeName>
        <fullName evidence="3">30S ribosomal protein S14</fullName>
    </alternativeName>
</protein>